<name>DINI_SHIFL</name>
<gene>
    <name type="primary">dinI</name>
    <name type="ordered locus">SF1067</name>
    <name type="ordered locus">S1145</name>
</gene>
<reference key="1">
    <citation type="journal article" date="2002" name="Nucleic Acids Res.">
        <title>Genome sequence of Shigella flexneri 2a: insights into pathogenicity through comparison with genomes of Escherichia coli K12 and O157.</title>
        <authorList>
            <person name="Jin Q."/>
            <person name="Yuan Z."/>
            <person name="Xu J."/>
            <person name="Wang Y."/>
            <person name="Shen Y."/>
            <person name="Lu W."/>
            <person name="Wang J."/>
            <person name="Liu H."/>
            <person name="Yang J."/>
            <person name="Yang F."/>
            <person name="Zhang X."/>
            <person name="Zhang J."/>
            <person name="Yang G."/>
            <person name="Wu H."/>
            <person name="Qu D."/>
            <person name="Dong J."/>
            <person name="Sun L."/>
            <person name="Xue Y."/>
            <person name="Zhao A."/>
            <person name="Gao Y."/>
            <person name="Zhu J."/>
            <person name="Kan B."/>
            <person name="Ding K."/>
            <person name="Chen S."/>
            <person name="Cheng H."/>
            <person name="Yao Z."/>
            <person name="He B."/>
            <person name="Chen R."/>
            <person name="Ma D."/>
            <person name="Qiang B."/>
            <person name="Wen Y."/>
            <person name="Hou Y."/>
            <person name="Yu J."/>
        </authorList>
    </citation>
    <scope>NUCLEOTIDE SEQUENCE [LARGE SCALE GENOMIC DNA]</scope>
    <source>
        <strain>301 / Serotype 2a</strain>
    </source>
</reference>
<reference key="2">
    <citation type="journal article" date="2003" name="Infect. Immun.">
        <title>Complete genome sequence and comparative genomics of Shigella flexneri serotype 2a strain 2457T.</title>
        <authorList>
            <person name="Wei J."/>
            <person name="Goldberg M.B."/>
            <person name="Burland V."/>
            <person name="Venkatesan M.M."/>
            <person name="Deng W."/>
            <person name="Fournier G."/>
            <person name="Mayhew G.F."/>
            <person name="Plunkett G. III"/>
            <person name="Rose D.J."/>
            <person name="Darling A."/>
            <person name="Mau B."/>
            <person name="Perna N.T."/>
            <person name="Payne S.M."/>
            <person name="Runyen-Janecky L.J."/>
            <person name="Zhou S."/>
            <person name="Schwartz D.C."/>
            <person name="Blattner F.R."/>
        </authorList>
    </citation>
    <scope>NUCLEOTIDE SEQUENCE [LARGE SCALE GENOMIC DNA]</scope>
    <source>
        <strain>ATCC 700930 / 2457T / Serotype 2a</strain>
    </source>
</reference>
<proteinExistence type="inferred from homology"/>
<comment type="function">
    <text evidence="1">Involved in SOS regulation. Inhibits RecA by preventing RecA to bind ssDNA. Can displace ssDNA from RecA (By similarity).</text>
</comment>
<comment type="similarity">
    <text evidence="2">Belongs to the DinI family.</text>
</comment>
<sequence length="81" mass="8949">MRIEVTIAKTSPLPAGAIDALAGELSRRIQYAFPDNEGHVSVRYAAANNLSVIGATKEDKQRISEILQETWESADDWFVSE</sequence>
<dbReference type="EMBL" id="AE005674">
    <property type="protein sequence ID" value="AAN42689.2"/>
    <property type="molecule type" value="Genomic_DNA"/>
</dbReference>
<dbReference type="EMBL" id="AE014073">
    <property type="protein sequence ID" value="AAP16576.1"/>
    <property type="molecule type" value="Genomic_DNA"/>
</dbReference>
<dbReference type="RefSeq" id="NP_706982.2">
    <property type="nucleotide sequence ID" value="NC_004337.2"/>
</dbReference>
<dbReference type="RefSeq" id="WP_001217754.1">
    <property type="nucleotide sequence ID" value="NZ_WPGW01000001.1"/>
</dbReference>
<dbReference type="SMR" id="P0ABR4"/>
<dbReference type="STRING" id="198214.SF1067"/>
<dbReference type="PaxDb" id="198214-SF1067"/>
<dbReference type="GeneID" id="1024017"/>
<dbReference type="GeneID" id="93776346"/>
<dbReference type="KEGG" id="sfl:SF1067"/>
<dbReference type="KEGG" id="sfx:S1145"/>
<dbReference type="PATRIC" id="fig|198214.7.peg.1250"/>
<dbReference type="HOGENOM" id="CLU_139795_1_0_6"/>
<dbReference type="Proteomes" id="UP000001006">
    <property type="component" value="Chromosome"/>
</dbReference>
<dbReference type="Proteomes" id="UP000002673">
    <property type="component" value="Chromosome"/>
</dbReference>
<dbReference type="GO" id="GO:0006281">
    <property type="term" value="P:DNA repair"/>
    <property type="evidence" value="ECO:0007669"/>
    <property type="project" value="UniProtKB-KW"/>
</dbReference>
<dbReference type="GO" id="GO:0009432">
    <property type="term" value="P:SOS response"/>
    <property type="evidence" value="ECO:0007669"/>
    <property type="project" value="UniProtKB-KW"/>
</dbReference>
<dbReference type="FunFam" id="3.30.910.10:FF:000001">
    <property type="entry name" value="DNA damage-inducible protein I"/>
    <property type="match status" value="1"/>
</dbReference>
<dbReference type="Gene3D" id="3.30.910.10">
    <property type="entry name" value="DinI-like"/>
    <property type="match status" value="1"/>
</dbReference>
<dbReference type="InterPro" id="IPR036687">
    <property type="entry name" value="DinI-like_sf"/>
</dbReference>
<dbReference type="InterPro" id="IPR010391">
    <property type="entry name" value="DNA_damage-inducible_DinI-like"/>
</dbReference>
<dbReference type="NCBIfam" id="NF007893">
    <property type="entry name" value="PRK10597.1"/>
    <property type="match status" value="1"/>
</dbReference>
<dbReference type="PANTHER" id="PTHR36572:SF2">
    <property type="entry name" value="DNA DAMAGE-INDUCIBLE PROTEIN I"/>
    <property type="match status" value="1"/>
</dbReference>
<dbReference type="PANTHER" id="PTHR36572">
    <property type="entry name" value="DNA DAMAGE-INDUCIBLE PROTEIN I-RELATED"/>
    <property type="match status" value="1"/>
</dbReference>
<dbReference type="Pfam" id="PF06183">
    <property type="entry name" value="DinI"/>
    <property type="match status" value="1"/>
</dbReference>
<dbReference type="SUPFAM" id="SSF54857">
    <property type="entry name" value="DNA damage-inducible protein DinI"/>
    <property type="match status" value="1"/>
</dbReference>
<accession>P0ABR4</accession>
<accession>Q47143</accession>
<accession>Q9R2Y7</accession>
<feature type="chain" id="PRO_0000201639" description="DNA damage-inducible protein I">
    <location>
        <begin position="1"/>
        <end position="81"/>
    </location>
</feature>
<keyword id="KW-0227">DNA damage</keyword>
<keyword id="KW-0234">DNA repair</keyword>
<keyword id="KW-1185">Reference proteome</keyword>
<keyword id="KW-0742">SOS response</keyword>
<organism>
    <name type="scientific">Shigella flexneri</name>
    <dbReference type="NCBI Taxonomy" id="623"/>
    <lineage>
        <taxon>Bacteria</taxon>
        <taxon>Pseudomonadati</taxon>
        <taxon>Pseudomonadota</taxon>
        <taxon>Gammaproteobacteria</taxon>
        <taxon>Enterobacterales</taxon>
        <taxon>Enterobacteriaceae</taxon>
        <taxon>Shigella</taxon>
    </lineage>
</organism>
<protein>
    <recommendedName>
        <fullName>DNA damage-inducible protein I</fullName>
    </recommendedName>
</protein>
<evidence type="ECO:0000250" key="1"/>
<evidence type="ECO:0000305" key="2"/>